<accession>Q8Y6H7</accession>
<protein>
    <recommendedName>
        <fullName evidence="1">UPF0435 protein lmo1707</fullName>
    </recommendedName>
</protein>
<sequence>MNLETPSQENLNFMLTEITTKLKMVNVGVFENLELDSVDYNALVDIYQLIKRKSTFSPREMQLFAEELRRVRK</sequence>
<organism>
    <name type="scientific">Listeria monocytogenes serovar 1/2a (strain ATCC BAA-679 / EGD-e)</name>
    <dbReference type="NCBI Taxonomy" id="169963"/>
    <lineage>
        <taxon>Bacteria</taxon>
        <taxon>Bacillati</taxon>
        <taxon>Bacillota</taxon>
        <taxon>Bacilli</taxon>
        <taxon>Bacillales</taxon>
        <taxon>Listeriaceae</taxon>
        <taxon>Listeria</taxon>
    </lineage>
</organism>
<feature type="chain" id="PRO_0000291411" description="UPF0435 protein lmo1707">
    <location>
        <begin position="1"/>
        <end position="73"/>
    </location>
</feature>
<keyword id="KW-1185">Reference proteome</keyword>
<evidence type="ECO:0000255" key="1">
    <source>
        <dbReference type="HAMAP-Rule" id="MF_00829"/>
    </source>
</evidence>
<name>Y1707_LISMO</name>
<reference key="1">
    <citation type="journal article" date="2001" name="Science">
        <title>Comparative genomics of Listeria species.</title>
        <authorList>
            <person name="Glaser P."/>
            <person name="Frangeul L."/>
            <person name="Buchrieser C."/>
            <person name="Rusniok C."/>
            <person name="Amend A."/>
            <person name="Baquero F."/>
            <person name="Berche P."/>
            <person name="Bloecker H."/>
            <person name="Brandt P."/>
            <person name="Chakraborty T."/>
            <person name="Charbit A."/>
            <person name="Chetouani F."/>
            <person name="Couve E."/>
            <person name="de Daruvar A."/>
            <person name="Dehoux P."/>
            <person name="Domann E."/>
            <person name="Dominguez-Bernal G."/>
            <person name="Duchaud E."/>
            <person name="Durant L."/>
            <person name="Dussurget O."/>
            <person name="Entian K.-D."/>
            <person name="Fsihi H."/>
            <person name="Garcia-del Portillo F."/>
            <person name="Garrido P."/>
            <person name="Gautier L."/>
            <person name="Goebel W."/>
            <person name="Gomez-Lopez N."/>
            <person name="Hain T."/>
            <person name="Hauf J."/>
            <person name="Jackson D."/>
            <person name="Jones L.-M."/>
            <person name="Kaerst U."/>
            <person name="Kreft J."/>
            <person name="Kuhn M."/>
            <person name="Kunst F."/>
            <person name="Kurapkat G."/>
            <person name="Madueno E."/>
            <person name="Maitournam A."/>
            <person name="Mata Vicente J."/>
            <person name="Ng E."/>
            <person name="Nedjari H."/>
            <person name="Nordsiek G."/>
            <person name="Novella S."/>
            <person name="de Pablos B."/>
            <person name="Perez-Diaz J.-C."/>
            <person name="Purcell R."/>
            <person name="Remmel B."/>
            <person name="Rose M."/>
            <person name="Schlueter T."/>
            <person name="Simoes N."/>
            <person name="Tierrez A."/>
            <person name="Vazquez-Boland J.-A."/>
            <person name="Voss H."/>
            <person name="Wehland J."/>
            <person name="Cossart P."/>
        </authorList>
    </citation>
    <scope>NUCLEOTIDE SEQUENCE [LARGE SCALE GENOMIC DNA]</scope>
    <source>
        <strain>ATCC BAA-679 / EGD-e</strain>
    </source>
</reference>
<proteinExistence type="inferred from homology"/>
<comment type="similarity">
    <text evidence="1">Belongs to the UPF0435 family.</text>
</comment>
<gene>
    <name type="ordered locus">lmo1707</name>
</gene>
<dbReference type="EMBL" id="AL591981">
    <property type="protein sequence ID" value="CAC99785.1"/>
    <property type="molecule type" value="Genomic_DNA"/>
</dbReference>
<dbReference type="PIR" id="AC1288">
    <property type="entry name" value="AC1288"/>
</dbReference>
<dbReference type="RefSeq" id="NP_465232.1">
    <property type="nucleotide sequence ID" value="NC_003210.1"/>
</dbReference>
<dbReference type="RefSeq" id="WP_003733118.1">
    <property type="nucleotide sequence ID" value="NZ_CP149495.1"/>
</dbReference>
<dbReference type="SMR" id="Q8Y6H7"/>
<dbReference type="PaxDb" id="169963-lmo1707"/>
<dbReference type="EnsemblBacteria" id="CAC99785">
    <property type="protein sequence ID" value="CAC99785"/>
    <property type="gene ID" value="CAC99785"/>
</dbReference>
<dbReference type="GeneID" id="985604"/>
<dbReference type="KEGG" id="lmo:lmo1707"/>
<dbReference type="PATRIC" id="fig|169963.11.peg.1750"/>
<dbReference type="eggNOG" id="COG4840">
    <property type="taxonomic scope" value="Bacteria"/>
</dbReference>
<dbReference type="HOGENOM" id="CLU_199533_1_0_9"/>
<dbReference type="OrthoDB" id="2361695at2"/>
<dbReference type="PhylomeDB" id="Q8Y6H7"/>
<dbReference type="BioCyc" id="LMON169963:LMO1707-MONOMER"/>
<dbReference type="Proteomes" id="UP000000817">
    <property type="component" value="Chromosome"/>
</dbReference>
<dbReference type="HAMAP" id="MF_00829">
    <property type="entry name" value="UPF0435"/>
    <property type="match status" value="1"/>
</dbReference>
<dbReference type="InterPro" id="IPR009507">
    <property type="entry name" value="UPF0435"/>
</dbReference>
<dbReference type="Pfam" id="PF06569">
    <property type="entry name" value="DUF1128"/>
    <property type="match status" value="1"/>
</dbReference>